<proteinExistence type="inferred from homology"/>
<name>Y541_PYRHO</name>
<keyword id="KW-0067">ATP-binding</keyword>
<keyword id="KW-0547">Nucleotide-binding</keyword>
<sequence>MFFDREEEIERLLEDISYEPNMVTFVYGPINSGKTTLIQEFLKRTSEKYVGFYINFRKTPVANYEEFSRVLFSFDSRIKMIKDVISILGKVNPWIPIPREVLNDILRDKEPINAFSYLREVLEEIRSSGKMPILVFDELQVIKDLKVNGSLIYQLFNFLIHLSKEAHLAHVFAVTSDSLFISEIFGNAKLSGRASYFPVYDLPEEKAIEFLLRLNLSEEESRLVVEYFGGKPSYLVEAPKHRKHLREWCERELTLRAREIRRFKSNLLLEFMDEEEVEVEELSEEAINLVNANILFYDPLRGTLRPQGKLELLAIRKVIKG</sequence>
<evidence type="ECO:0000255" key="1"/>
<evidence type="ECO:0000305" key="2"/>
<protein>
    <recommendedName>
        <fullName>Uncharacterized ATP-binding protein PH0541</fullName>
    </recommendedName>
</protein>
<comment type="similarity">
    <text evidence="2">Belongs to the archaeal ATPase family.</text>
</comment>
<dbReference type="EMBL" id="BA000001">
    <property type="protein sequence ID" value="BAA29630.1"/>
    <property type="molecule type" value="Genomic_DNA"/>
</dbReference>
<dbReference type="PIR" id="A71168">
    <property type="entry name" value="A71168"/>
</dbReference>
<dbReference type="RefSeq" id="WP_010884643.1">
    <property type="nucleotide sequence ID" value="NC_000961.1"/>
</dbReference>
<dbReference type="SMR" id="O58276"/>
<dbReference type="EnsemblBacteria" id="BAA29630">
    <property type="protein sequence ID" value="BAA29630"/>
    <property type="gene ID" value="BAA29630"/>
</dbReference>
<dbReference type="GeneID" id="1444430"/>
<dbReference type="KEGG" id="pho:PH0541"/>
<dbReference type="eggNOG" id="arCOG03407">
    <property type="taxonomic scope" value="Archaea"/>
</dbReference>
<dbReference type="OrthoDB" id="86228at2157"/>
<dbReference type="Proteomes" id="UP000000752">
    <property type="component" value="Chromosome"/>
</dbReference>
<dbReference type="GO" id="GO:0005524">
    <property type="term" value="F:ATP binding"/>
    <property type="evidence" value="ECO:0007669"/>
    <property type="project" value="UniProtKB-KW"/>
</dbReference>
<dbReference type="GO" id="GO:0016887">
    <property type="term" value="F:ATP hydrolysis activity"/>
    <property type="evidence" value="ECO:0007669"/>
    <property type="project" value="InterPro"/>
</dbReference>
<dbReference type="Gene3D" id="3.40.50.300">
    <property type="entry name" value="P-loop containing nucleotide triphosphate hydrolases"/>
    <property type="match status" value="1"/>
</dbReference>
<dbReference type="Gene3D" id="1.10.10.10">
    <property type="entry name" value="Winged helix-like DNA-binding domain superfamily/Winged helix DNA-binding domain"/>
    <property type="match status" value="1"/>
</dbReference>
<dbReference type="InterPro" id="IPR003593">
    <property type="entry name" value="AAA+_ATPase"/>
</dbReference>
<dbReference type="InterPro" id="IPR051667">
    <property type="entry name" value="Archaeal_ATPase_domain"/>
</dbReference>
<dbReference type="InterPro" id="IPR011579">
    <property type="entry name" value="ATPase_dom"/>
</dbReference>
<dbReference type="InterPro" id="IPR049081">
    <property type="entry name" value="MJ1010-like_2nd"/>
</dbReference>
<dbReference type="InterPro" id="IPR027417">
    <property type="entry name" value="P-loop_NTPase"/>
</dbReference>
<dbReference type="InterPro" id="IPR036388">
    <property type="entry name" value="WH-like_DNA-bd_sf"/>
</dbReference>
<dbReference type="PANTHER" id="PTHR37096:SF1">
    <property type="entry name" value="AAA+ ATPASE DOMAIN-CONTAINING PROTEIN"/>
    <property type="match status" value="1"/>
</dbReference>
<dbReference type="PANTHER" id="PTHR37096">
    <property type="entry name" value="YALI0E33429P"/>
    <property type="match status" value="1"/>
</dbReference>
<dbReference type="Pfam" id="PF01637">
    <property type="entry name" value="ATPase_2"/>
    <property type="match status" value="1"/>
</dbReference>
<dbReference type="Pfam" id="PF21690">
    <property type="entry name" value="MJ1010-like_2nd"/>
    <property type="match status" value="1"/>
</dbReference>
<dbReference type="SMART" id="SM00382">
    <property type="entry name" value="AAA"/>
    <property type="match status" value="1"/>
</dbReference>
<dbReference type="SUPFAM" id="SSF52540">
    <property type="entry name" value="P-loop containing nucleoside triphosphate hydrolases"/>
    <property type="match status" value="1"/>
</dbReference>
<organism>
    <name type="scientific">Pyrococcus horikoshii (strain ATCC 700860 / DSM 12428 / JCM 9974 / NBRC 100139 / OT-3)</name>
    <dbReference type="NCBI Taxonomy" id="70601"/>
    <lineage>
        <taxon>Archaea</taxon>
        <taxon>Methanobacteriati</taxon>
        <taxon>Methanobacteriota</taxon>
        <taxon>Thermococci</taxon>
        <taxon>Thermococcales</taxon>
        <taxon>Thermococcaceae</taxon>
        <taxon>Pyrococcus</taxon>
    </lineage>
</organism>
<feature type="chain" id="PRO_0000184687" description="Uncharacterized ATP-binding protein PH0541">
    <location>
        <begin position="1"/>
        <end position="321"/>
    </location>
</feature>
<feature type="binding site" evidence="1">
    <location>
        <begin position="28"/>
        <end position="35"/>
    </location>
    <ligand>
        <name>ATP</name>
        <dbReference type="ChEBI" id="CHEBI:30616"/>
    </ligand>
</feature>
<gene>
    <name type="ordered locus">PH0541</name>
</gene>
<reference key="1">
    <citation type="journal article" date="1998" name="DNA Res.">
        <title>Complete sequence and gene organization of the genome of a hyper-thermophilic archaebacterium, Pyrococcus horikoshii OT3.</title>
        <authorList>
            <person name="Kawarabayasi Y."/>
            <person name="Sawada M."/>
            <person name="Horikawa H."/>
            <person name="Haikawa Y."/>
            <person name="Hino Y."/>
            <person name="Yamamoto S."/>
            <person name="Sekine M."/>
            <person name="Baba S."/>
            <person name="Kosugi H."/>
            <person name="Hosoyama A."/>
            <person name="Nagai Y."/>
            <person name="Sakai M."/>
            <person name="Ogura K."/>
            <person name="Otsuka R."/>
            <person name="Nakazawa H."/>
            <person name="Takamiya M."/>
            <person name="Ohfuku Y."/>
            <person name="Funahashi T."/>
            <person name="Tanaka T."/>
            <person name="Kudoh Y."/>
            <person name="Yamazaki J."/>
            <person name="Kushida N."/>
            <person name="Oguchi A."/>
            <person name="Aoki K."/>
            <person name="Yoshizawa T."/>
            <person name="Nakamura Y."/>
            <person name="Robb F.T."/>
            <person name="Horikoshi K."/>
            <person name="Masuchi Y."/>
            <person name="Shizuya H."/>
            <person name="Kikuchi H."/>
        </authorList>
    </citation>
    <scope>NUCLEOTIDE SEQUENCE [LARGE SCALE GENOMIC DNA]</scope>
    <source>
        <strain>ATCC 700860 / DSM 12428 / JCM 9974 / NBRC 100139 / OT-3</strain>
    </source>
</reference>
<accession>O58276</accession>